<dbReference type="EC" id="1.2.1.12" evidence="1"/>
<dbReference type="EMBL" id="M63363">
    <property type="protein sequence ID" value="AAA23850.1"/>
    <property type="molecule type" value="Genomic_DNA"/>
</dbReference>
<dbReference type="PIR" id="I41221">
    <property type="entry name" value="I41221"/>
</dbReference>
<dbReference type="SMR" id="P24751"/>
<dbReference type="UniPathway" id="UPA00109">
    <property type="reaction ID" value="UER00184"/>
</dbReference>
<dbReference type="GO" id="GO:0005737">
    <property type="term" value="C:cytoplasm"/>
    <property type="evidence" value="ECO:0007669"/>
    <property type="project" value="UniProtKB-SubCell"/>
</dbReference>
<dbReference type="GO" id="GO:0004365">
    <property type="term" value="F:glyceraldehyde-3-phosphate dehydrogenase (NAD+) (phosphorylating) activity"/>
    <property type="evidence" value="ECO:0000250"/>
    <property type="project" value="UniProtKB"/>
</dbReference>
<dbReference type="GO" id="GO:0051287">
    <property type="term" value="F:NAD binding"/>
    <property type="evidence" value="ECO:0000250"/>
    <property type="project" value="UniProtKB"/>
</dbReference>
<dbReference type="GO" id="GO:0050661">
    <property type="term" value="F:NADP binding"/>
    <property type="evidence" value="ECO:0007669"/>
    <property type="project" value="InterPro"/>
</dbReference>
<dbReference type="GO" id="GO:0006006">
    <property type="term" value="P:glucose metabolic process"/>
    <property type="evidence" value="ECO:0007669"/>
    <property type="project" value="InterPro"/>
</dbReference>
<dbReference type="GO" id="GO:0006096">
    <property type="term" value="P:glycolytic process"/>
    <property type="evidence" value="ECO:0007669"/>
    <property type="project" value="UniProtKB-UniPathway"/>
</dbReference>
<dbReference type="CDD" id="cd18126">
    <property type="entry name" value="GAPDH_I_C"/>
    <property type="match status" value="1"/>
</dbReference>
<dbReference type="CDD" id="cd05214">
    <property type="entry name" value="GAPDH_I_N"/>
    <property type="match status" value="1"/>
</dbReference>
<dbReference type="FunFam" id="3.30.360.10:FF:000001">
    <property type="entry name" value="Glyceraldehyde-3-phosphate dehydrogenase"/>
    <property type="match status" value="1"/>
</dbReference>
<dbReference type="FunFam" id="3.40.50.720:FF:000001">
    <property type="entry name" value="Glyceraldehyde-3-phosphate dehydrogenase"/>
    <property type="match status" value="1"/>
</dbReference>
<dbReference type="Gene3D" id="3.30.360.10">
    <property type="entry name" value="Dihydrodipicolinate Reductase, domain 2"/>
    <property type="match status" value="1"/>
</dbReference>
<dbReference type="Gene3D" id="3.40.50.720">
    <property type="entry name" value="NAD(P)-binding Rossmann-like Domain"/>
    <property type="match status" value="1"/>
</dbReference>
<dbReference type="InterPro" id="IPR020831">
    <property type="entry name" value="GlycerAld/Erythrose_P_DH"/>
</dbReference>
<dbReference type="InterPro" id="IPR020830">
    <property type="entry name" value="GlycerAld_3-P_DH_AS"/>
</dbReference>
<dbReference type="InterPro" id="IPR020829">
    <property type="entry name" value="GlycerAld_3-P_DH_cat"/>
</dbReference>
<dbReference type="InterPro" id="IPR020828">
    <property type="entry name" value="GlycerAld_3-P_DH_NAD(P)-bd"/>
</dbReference>
<dbReference type="InterPro" id="IPR006424">
    <property type="entry name" value="Glyceraldehyde-3-P_DH_1"/>
</dbReference>
<dbReference type="InterPro" id="IPR036291">
    <property type="entry name" value="NAD(P)-bd_dom_sf"/>
</dbReference>
<dbReference type="NCBIfam" id="TIGR01534">
    <property type="entry name" value="GAPDH-I"/>
    <property type="match status" value="1"/>
</dbReference>
<dbReference type="NCBIfam" id="NF011954">
    <property type="entry name" value="PRK15425.1"/>
    <property type="match status" value="1"/>
</dbReference>
<dbReference type="PANTHER" id="PTHR10836">
    <property type="entry name" value="GLYCERALDEHYDE 3-PHOSPHATE DEHYDROGENASE"/>
    <property type="match status" value="1"/>
</dbReference>
<dbReference type="PANTHER" id="PTHR10836:SF76">
    <property type="entry name" value="GLYCERALDEHYDE-3-PHOSPHATE DEHYDROGENASE-RELATED"/>
    <property type="match status" value="1"/>
</dbReference>
<dbReference type="Pfam" id="PF02800">
    <property type="entry name" value="Gp_dh_C"/>
    <property type="match status" value="1"/>
</dbReference>
<dbReference type="Pfam" id="PF00044">
    <property type="entry name" value="Gp_dh_N"/>
    <property type="match status" value="1"/>
</dbReference>
<dbReference type="PIRSF" id="PIRSF000149">
    <property type="entry name" value="GAP_DH"/>
    <property type="match status" value="1"/>
</dbReference>
<dbReference type="PRINTS" id="PR00078">
    <property type="entry name" value="G3PDHDRGNASE"/>
</dbReference>
<dbReference type="SMART" id="SM00846">
    <property type="entry name" value="Gp_dh_N"/>
    <property type="match status" value="1"/>
</dbReference>
<dbReference type="SUPFAM" id="SSF55347">
    <property type="entry name" value="Glyceraldehyde-3-phosphate dehydrogenase-like, C-terminal domain"/>
    <property type="match status" value="1"/>
</dbReference>
<dbReference type="SUPFAM" id="SSF51735">
    <property type="entry name" value="NAD(P)-binding Rossmann-fold domains"/>
    <property type="match status" value="1"/>
</dbReference>
<dbReference type="PROSITE" id="PS00071">
    <property type="entry name" value="GAPDH"/>
    <property type="match status" value="1"/>
</dbReference>
<sequence>IVFRAAQKRSDIEIVAINDLLDAEYMAYMLKYDSTHGRFDGTVEVKDGHLVVNGKKIRVTAERDPANLKWDEVGVDVVAEATGIFLTDETARKHITAGAKKVVLTGPSKDNTPMFVRGANFDTYAGQDIVSNASCTTNCLAPLAKVINDNFGIVEGLMTTVHATTATQKTVDGPSHKDWRGGRGAAQNIIPSSTGAAKAVGKVLPELNGKLTGMAFRVPTPNVSVVDLTVRLEKAASYEEIKKAIKAASEGAMKGVLGYTEDDVVSTDFNGEVCTSVFDAKAGIALNDNFVKLV</sequence>
<organism>
    <name type="scientific">Pseudescherichia vulneris</name>
    <name type="common">Escherichia vulneris</name>
    <dbReference type="NCBI Taxonomy" id="566"/>
    <lineage>
        <taxon>Bacteria</taxon>
        <taxon>Pseudomonadati</taxon>
        <taxon>Pseudomonadota</taxon>
        <taxon>Gammaproteobacteria</taxon>
        <taxon>Enterobacterales</taxon>
        <taxon>Enterobacteriaceae</taxon>
        <taxon>Pseudescherichia</taxon>
    </lineage>
</organism>
<evidence type="ECO:0000250" key="1">
    <source>
        <dbReference type="UniProtKB" id="P0A9B2"/>
    </source>
</evidence>
<evidence type="ECO:0000305" key="2"/>
<comment type="function">
    <text evidence="1">Catalyzes the oxidative phosphorylation of glyceraldehyde 3-phosphate (G3P) to 1,3-bisphosphoglycerate (BPG) using the cofactor NAD. The first reaction step involves the formation of a hemiacetal intermediate between G3P and a cysteine residue, and this hemiacetal intermediate is then oxidized to a thioester, with concomitant reduction of NAD to NADH. The reduced NADH is then exchanged with the second NAD, and the thioester is attacked by a nucleophilic inorganic phosphate to produce BPG.</text>
</comment>
<comment type="catalytic activity">
    <reaction evidence="1">
        <text>D-glyceraldehyde 3-phosphate + phosphate + NAD(+) = (2R)-3-phospho-glyceroyl phosphate + NADH + H(+)</text>
        <dbReference type="Rhea" id="RHEA:10300"/>
        <dbReference type="ChEBI" id="CHEBI:15378"/>
        <dbReference type="ChEBI" id="CHEBI:43474"/>
        <dbReference type="ChEBI" id="CHEBI:57540"/>
        <dbReference type="ChEBI" id="CHEBI:57604"/>
        <dbReference type="ChEBI" id="CHEBI:57945"/>
        <dbReference type="ChEBI" id="CHEBI:59776"/>
        <dbReference type="EC" id="1.2.1.12"/>
    </reaction>
</comment>
<comment type="pathway">
    <text evidence="2">Carbohydrate degradation; glycolysis; pyruvate from D-glyceraldehyde 3-phosphate: step 1/5.</text>
</comment>
<comment type="subunit">
    <text evidence="1">Homotetramer.</text>
</comment>
<comment type="subcellular location">
    <subcellularLocation>
        <location evidence="2">Cytoplasm</location>
    </subcellularLocation>
</comment>
<comment type="similarity">
    <text evidence="2">Belongs to the glyceraldehyde-3-phosphate dehydrogenase family.</text>
</comment>
<proteinExistence type="inferred from homology"/>
<reference key="1">
    <citation type="journal article" date="1991" name="J. Gen. Microbiol.">
        <title>Molecular and evolutionary relationships among enteric bacteria.</title>
        <authorList>
            <person name="Lawrence J.G."/>
            <person name="Ochman H."/>
            <person name="Hartl D.L."/>
        </authorList>
    </citation>
    <scope>NUCLEOTIDE SEQUENCE [GENOMIC DNA]</scope>
    <source>
        <strain>ATCC 29943 / CDC 2898-73</strain>
    </source>
</reference>
<keyword id="KW-0007">Acetylation</keyword>
<keyword id="KW-0963">Cytoplasm</keyword>
<keyword id="KW-0324">Glycolysis</keyword>
<keyword id="KW-0520">NAD</keyword>
<keyword id="KW-0547">Nucleotide-binding</keyword>
<keyword id="KW-0560">Oxidoreductase</keyword>
<name>G3P_PSEVU</name>
<accession>P24751</accession>
<feature type="chain" id="PRO_0000145659" description="Glyceraldehyde-3-phosphate dehydrogenase">
    <location>
        <begin position="1" status="less than"/>
        <end position="294" status="greater than"/>
    </location>
</feature>
<feature type="active site" description="Nucleophile" evidence="1">
    <location>
        <position position="135"/>
    </location>
</feature>
<feature type="binding site" evidence="1">
    <location>
        <position position="19"/>
    </location>
    <ligand>
        <name>NAD(+)</name>
        <dbReference type="ChEBI" id="CHEBI:57540"/>
    </ligand>
</feature>
<feature type="binding site" evidence="1">
    <location>
        <position position="63"/>
    </location>
    <ligand>
        <name>NAD(+)</name>
        <dbReference type="ChEBI" id="CHEBI:57540"/>
    </ligand>
</feature>
<feature type="binding site" evidence="1">
    <location>
        <position position="105"/>
    </location>
    <ligand>
        <name>NAD(+)</name>
        <dbReference type="ChEBI" id="CHEBI:57540"/>
    </ligand>
</feature>
<feature type="binding site" evidence="1">
    <location>
        <begin position="134"/>
        <end position="136"/>
    </location>
    <ligand>
        <name>D-glyceraldehyde 3-phosphate</name>
        <dbReference type="ChEBI" id="CHEBI:59776"/>
    </ligand>
</feature>
<feature type="binding site" evidence="1">
    <location>
        <position position="165"/>
    </location>
    <ligand>
        <name>D-glyceraldehyde 3-phosphate</name>
        <dbReference type="ChEBI" id="CHEBI:59776"/>
    </ligand>
</feature>
<feature type="binding site" evidence="1">
    <location>
        <begin position="194"/>
        <end position="195"/>
    </location>
    <ligand>
        <name>D-glyceraldehyde 3-phosphate</name>
        <dbReference type="ChEBI" id="CHEBI:59776"/>
    </ligand>
</feature>
<feature type="binding site" evidence="1">
    <location>
        <position position="217"/>
    </location>
    <ligand>
        <name>D-glyceraldehyde 3-phosphate</name>
        <dbReference type="ChEBI" id="CHEBI:59776"/>
    </ligand>
</feature>
<feature type="site" description="Activates thiol group during catalysis" evidence="1">
    <location>
        <position position="162"/>
    </location>
</feature>
<feature type="modified residue" description="N6-acetyllysine" evidence="1">
    <location>
        <position position="177"/>
    </location>
</feature>
<feature type="modified residue" description="N6-acetyllysine" evidence="1">
    <location>
        <position position="234"/>
    </location>
</feature>
<feature type="non-terminal residue">
    <location>
        <position position="1"/>
    </location>
</feature>
<feature type="non-terminal residue">
    <location>
        <position position="294"/>
    </location>
</feature>
<protein>
    <recommendedName>
        <fullName evidence="1">Glyceraldehyde-3-phosphate dehydrogenase</fullName>
        <shortName evidence="1">GAPDH</shortName>
        <ecNumber evidence="1">1.2.1.12</ecNumber>
    </recommendedName>
    <alternativeName>
        <fullName evidence="1">NAD-dependent glyceraldehyde-3-phosphate dehydrogenase</fullName>
    </alternativeName>
</protein>
<gene>
    <name type="primary">gap</name>
</gene>